<comment type="function">
    <text evidence="1">Ionotropic glutamate receptor that functions as a cation-permeable ligand-gated ion channel, gated by L-glutamate and the glutamatergic agonist kainic acid. L-glutamate acts as an excitatory neurotransmitter at many synapses in the central nervous system. Binding of the excitatory neurotransmitter L-glutamate induces a conformation change, leading to the opening of the cation channel, and thereby converts the chemical signal to an electrical impulse. The receptor then desensitizes rapidly and enters a transient inactive state, characterized by the presence of bound agonist.</text>
</comment>
<comment type="catalytic activity">
    <reaction evidence="1">
        <text>Ca(2+)(in) = Ca(2+)(out)</text>
        <dbReference type="Rhea" id="RHEA:29671"/>
        <dbReference type="ChEBI" id="CHEBI:29108"/>
    </reaction>
</comment>
<comment type="subunit">
    <text evidence="1">Homotetramer or heterotetramer of pore-forming glutamate receptor subunits. Tetramers may be formed by the dimerization of dimers. Can form functional heteromeric receptors with GRIK4 and GRIK5. Interacts with KLHL17.</text>
</comment>
<comment type="subcellular location">
    <subcellularLocation>
        <location evidence="1">Cell membrane</location>
        <topology evidence="3">Multi-pass membrane protein</topology>
    </subcellularLocation>
    <subcellularLocation>
        <location evidence="1">Postsynaptic cell membrane</location>
        <topology evidence="3">Multi-pass membrane protein</topology>
    </subcellularLocation>
</comment>
<comment type="miscellaneous">
    <text evidence="2">The postsynaptic actions of Glu are mediated by a variety of receptors that are named according to their selective agonists. This receptor binds domoate &gt; kainate &gt; L-glutamate = quisqualate &gt; CNQX = DNQX &gt; AMPA &gt; dihydrokainate &gt; NMDA (By similarity).</text>
</comment>
<comment type="similarity">
    <text evidence="4">Belongs to the glutamate-gated ion channel (TC 1.A.10.1) family. GRIK1 subfamily.</text>
</comment>
<name>GRIK1_MACFA</name>
<protein>
    <recommendedName>
        <fullName>Glutamate receptor ionotropic, kainate 1</fullName>
        <shortName>GluK1</shortName>
    </recommendedName>
    <alternativeName>
        <fullName>Glutamate receptor 5</fullName>
        <shortName>GluR-5</shortName>
        <shortName>GluR5</shortName>
    </alternativeName>
</protein>
<gene>
    <name type="primary">GRIK1</name>
    <name type="synonym">GLUR5</name>
</gene>
<evidence type="ECO:0000250" key="1">
    <source>
        <dbReference type="UniProtKB" id="P22756"/>
    </source>
</evidence>
<evidence type="ECO:0000250" key="2">
    <source>
        <dbReference type="UniProtKB" id="P39086"/>
    </source>
</evidence>
<evidence type="ECO:0000255" key="3"/>
<evidence type="ECO:0000305" key="4"/>
<proteinExistence type="evidence at transcript level"/>
<sequence length="918" mass="103957">MELGTLLAQPGLWTRDTSWALLYFLCYILPQTAPQVLRIGGIFETVENEPVNVEELAFKFAVTSINRNRTLMPNTTLTYDIQRINLFDSFEASRRACDQLALGVAALFGPSHSSSVSAVQSICNALEVPHIQTRWKHPSVDNKDLFYINLYPDYAAISRAILDLVLYYNWKTVTVVYEDSTGLIRLQELIKAPSRYNIKIKIRQLPSGNKDAKPLLKEMKKGKEFYVIFDCSHETAAEILKQILFMGMMTEYYHYFFTTLDLFALDLELYRYSGVNMTGFRLLNIDNPHVSSIIEKWSMERLQAPPRPETGLLDGMMTTEAALMYDAVYMVAIASHRASQLTVSSLQCHRHKPWRLGPRFMNLIKEARWDGLTGHITFNKTNGLRKDFDLDIISLKEEGTEKAAGEVSKHLYKVWKKIGIWNSNSGLNMTDSNKDKSSNITDSLANRTLIVTTILEEPYVMYRKSDKPLYGNDRFEGYCLDLLKELSNILGFIYDVKLVPDGKYGAQNDKGEWNGMVKELIDHRADLAVAPLTITYVREKVIDFSKPFMTLGISILYRKPNGTNPGVFSFLNPLSPDIWMYVLLACLGVSCVLFVIARFTPYEWYNPHPCNPDSDVVENNFTLLNSFWFGVGALMQQGSELMPKALSTRIVGGIWWFFTLIIISSYTANLAAFLTVERMESPIDSADDLAKQTKIEYGAVRDGSTMTFFKKSKISTYEKMWAFMSSRQQTALVRNSDEGIQRVLTTDYALLMESTSIEYVTQRNCNLTQIGGLIDSKGYGVGTPIGSPYRDKITIAILQLQEEGKLHMMKEKWWRGNGCPEEDNKEASALGVENIGGIFIVLAAGLVLSVFVAIGEFIYKSRKNNDIEQAFCFFYGLQCKQTHPTNSTSGTTLSTDLECGKLIREERGIRKQSSVHTV</sequence>
<feature type="signal peptide" evidence="3">
    <location>
        <begin position="1"/>
        <end position="30"/>
    </location>
</feature>
<feature type="chain" id="PRO_0000271756" description="Glutamate receptor ionotropic, kainate 1">
    <location>
        <begin position="31"/>
        <end position="918"/>
    </location>
</feature>
<feature type="topological domain" description="Extracellular" evidence="3">
    <location>
        <begin position="31"/>
        <end position="576"/>
    </location>
</feature>
<feature type="transmembrane region" description="Helical" evidence="3">
    <location>
        <begin position="577"/>
        <end position="597"/>
    </location>
</feature>
<feature type="topological domain" description="Cytoplasmic" evidence="3">
    <location>
        <begin position="598"/>
        <end position="653"/>
    </location>
</feature>
<feature type="transmembrane region" description="Helical" evidence="3">
    <location>
        <begin position="654"/>
        <end position="674"/>
    </location>
</feature>
<feature type="topological domain" description="Extracellular" evidence="3">
    <location>
        <begin position="675"/>
        <end position="834"/>
    </location>
</feature>
<feature type="transmembrane region" description="Helical" evidence="3">
    <location>
        <begin position="835"/>
        <end position="855"/>
    </location>
</feature>
<feature type="topological domain" description="Cytoplasmic" evidence="3">
    <location>
        <begin position="856"/>
        <end position="918"/>
    </location>
</feature>
<feature type="binding site" evidence="1">
    <location>
        <position position="531"/>
    </location>
    <ligand>
        <name>L-glutamate</name>
        <dbReference type="ChEBI" id="CHEBI:29985"/>
    </ligand>
</feature>
<feature type="binding site" evidence="1">
    <location>
        <position position="533"/>
    </location>
    <ligand>
        <name>L-glutamate</name>
        <dbReference type="ChEBI" id="CHEBI:29985"/>
    </ligand>
</feature>
<feature type="binding site" evidence="1">
    <location>
        <position position="538"/>
    </location>
    <ligand>
        <name>L-glutamate</name>
        <dbReference type="ChEBI" id="CHEBI:29985"/>
    </ligand>
</feature>
<feature type="binding site" evidence="1">
    <location>
        <position position="704"/>
    </location>
    <ligand>
        <name>L-glutamate</name>
        <dbReference type="ChEBI" id="CHEBI:29985"/>
    </ligand>
</feature>
<feature type="binding site" evidence="1">
    <location>
        <position position="705"/>
    </location>
    <ligand>
        <name>L-glutamate</name>
        <dbReference type="ChEBI" id="CHEBI:29985"/>
    </ligand>
</feature>
<feature type="binding site" evidence="1">
    <location>
        <position position="753"/>
    </location>
    <ligand>
        <name>L-glutamate</name>
        <dbReference type="ChEBI" id="CHEBI:29985"/>
    </ligand>
</feature>
<feature type="modified residue" description="Phosphoserine; by PKC" evidence="3">
    <location>
        <position position="725"/>
    </location>
</feature>
<feature type="modified residue" description="Phosphothreonine; by PKC" evidence="3">
    <location>
        <position position="761"/>
    </location>
</feature>
<feature type="glycosylation site" description="N-linked (GlcNAc...) asparagine" evidence="3">
    <location>
        <position position="68"/>
    </location>
</feature>
<feature type="glycosylation site" description="N-linked (GlcNAc...) asparagine" evidence="3">
    <location>
        <position position="74"/>
    </location>
</feature>
<feature type="glycosylation site" description="N-linked (GlcNAc...) asparagine" evidence="3">
    <location>
        <position position="276"/>
    </location>
</feature>
<feature type="glycosylation site" description="N-linked (GlcNAc...) asparagine" evidence="3">
    <location>
        <position position="379"/>
    </location>
</feature>
<feature type="glycosylation site" description="N-linked (GlcNAc...) asparagine" evidence="3">
    <location>
        <position position="428"/>
    </location>
</feature>
<feature type="glycosylation site" description="N-linked (GlcNAc...) asparagine" evidence="3">
    <location>
        <position position="439"/>
    </location>
</feature>
<feature type="glycosylation site" description="N-linked (GlcNAc...) asparagine" evidence="3">
    <location>
        <position position="446"/>
    </location>
</feature>
<feature type="glycosylation site" description="N-linked (GlcNAc...) asparagine" evidence="3">
    <location>
        <position position="561"/>
    </location>
</feature>
<feature type="glycosylation site" description="N-linked (GlcNAc...) asparagine" evidence="3">
    <location>
        <position position="766"/>
    </location>
</feature>
<feature type="disulfide bond" evidence="2">
    <location>
        <begin position="765"/>
        <end position="819"/>
    </location>
</feature>
<accession>Q38PU4</accession>
<dbReference type="EMBL" id="DQ159933">
    <property type="protein sequence ID" value="ABA47257.1"/>
    <property type="molecule type" value="mRNA"/>
</dbReference>
<dbReference type="RefSeq" id="NP_001271466.1">
    <property type="nucleotide sequence ID" value="NM_001284537.1"/>
</dbReference>
<dbReference type="SMR" id="Q38PU4"/>
<dbReference type="STRING" id="9541.ENSMFAP00000043807"/>
<dbReference type="GlyCosmos" id="Q38PU4">
    <property type="glycosylation" value="9 sites, No reported glycans"/>
</dbReference>
<dbReference type="Ensembl" id="ENSMFAT00000018112.2">
    <property type="protein sequence ID" value="ENSMFAP00000043822.1"/>
    <property type="gene ID" value="ENSMFAG00000039272.2"/>
</dbReference>
<dbReference type="VEuPathDB" id="HostDB:ENSMFAG00000039272"/>
<dbReference type="eggNOG" id="KOG1052">
    <property type="taxonomic scope" value="Eukaryota"/>
</dbReference>
<dbReference type="GeneTree" id="ENSGT00940000156253"/>
<dbReference type="Proteomes" id="UP000233100">
    <property type="component" value="Chromosome 3"/>
</dbReference>
<dbReference type="Bgee" id="ENSMFAG00000039272">
    <property type="expression patterns" value="Expressed in temporal lobe and 2 other cell types or tissues"/>
</dbReference>
<dbReference type="GO" id="GO:0045211">
    <property type="term" value="C:postsynaptic membrane"/>
    <property type="evidence" value="ECO:0007669"/>
    <property type="project" value="UniProtKB-SubCell"/>
</dbReference>
<dbReference type="GO" id="GO:0022849">
    <property type="term" value="F:glutamate-gated calcium ion channel activity"/>
    <property type="evidence" value="ECO:0000250"/>
    <property type="project" value="UniProtKB"/>
</dbReference>
<dbReference type="GO" id="GO:0015277">
    <property type="term" value="F:kainate selective glutamate receptor activity"/>
    <property type="evidence" value="ECO:0000250"/>
    <property type="project" value="UniProtKB"/>
</dbReference>
<dbReference type="CDD" id="cd06382">
    <property type="entry name" value="PBP1_iGluR_Kainate"/>
    <property type="match status" value="1"/>
</dbReference>
<dbReference type="FunFam" id="3.40.50.2300:FF:000010">
    <property type="entry name" value="Glutamate ionotropic receptor kainate type subunit 1"/>
    <property type="match status" value="1"/>
</dbReference>
<dbReference type="FunFam" id="3.40.190.10:FF:000210">
    <property type="entry name" value="Glutamate receptor ionotropic, kainate 1"/>
    <property type="match status" value="1"/>
</dbReference>
<dbReference type="FunFam" id="3.40.190.10:FF:000240">
    <property type="entry name" value="Glutamate receptor ionotropic, kainate 2"/>
    <property type="match status" value="1"/>
</dbReference>
<dbReference type="FunFam" id="1.10.287.70:FF:000010">
    <property type="entry name" value="Putative glutamate receptor ionotropic kainate 1"/>
    <property type="match status" value="1"/>
</dbReference>
<dbReference type="Gene3D" id="1.10.287.70">
    <property type="match status" value="1"/>
</dbReference>
<dbReference type="Gene3D" id="3.40.50.2300">
    <property type="match status" value="2"/>
</dbReference>
<dbReference type="Gene3D" id="3.40.190.10">
    <property type="entry name" value="Periplasmic binding protein-like II"/>
    <property type="match status" value="1"/>
</dbReference>
<dbReference type="InterPro" id="IPR001828">
    <property type="entry name" value="ANF_lig-bd_rcpt"/>
</dbReference>
<dbReference type="InterPro" id="IPR019594">
    <property type="entry name" value="Glu/Gly-bd"/>
</dbReference>
<dbReference type="InterPro" id="IPR001508">
    <property type="entry name" value="Iono_Glu_rcpt_met"/>
</dbReference>
<dbReference type="InterPro" id="IPR015683">
    <property type="entry name" value="Ionotropic_Glu_rcpt"/>
</dbReference>
<dbReference type="InterPro" id="IPR001320">
    <property type="entry name" value="Iontro_rcpt_C"/>
</dbReference>
<dbReference type="InterPro" id="IPR028082">
    <property type="entry name" value="Peripla_BP_I"/>
</dbReference>
<dbReference type="PANTHER" id="PTHR18966">
    <property type="entry name" value="IONOTROPIC GLUTAMATE RECEPTOR"/>
    <property type="match status" value="1"/>
</dbReference>
<dbReference type="Pfam" id="PF01094">
    <property type="entry name" value="ANF_receptor"/>
    <property type="match status" value="1"/>
</dbReference>
<dbReference type="Pfam" id="PF00060">
    <property type="entry name" value="Lig_chan"/>
    <property type="match status" value="1"/>
</dbReference>
<dbReference type="Pfam" id="PF10613">
    <property type="entry name" value="Lig_chan-Glu_bd"/>
    <property type="match status" value="1"/>
</dbReference>
<dbReference type="PRINTS" id="PR00177">
    <property type="entry name" value="NMDARECEPTOR"/>
</dbReference>
<dbReference type="SMART" id="SM00918">
    <property type="entry name" value="Lig_chan-Glu_bd"/>
    <property type="match status" value="1"/>
</dbReference>
<dbReference type="SMART" id="SM00079">
    <property type="entry name" value="PBPe"/>
    <property type="match status" value="1"/>
</dbReference>
<dbReference type="SUPFAM" id="SSF53822">
    <property type="entry name" value="Periplasmic binding protein-like I"/>
    <property type="match status" value="1"/>
</dbReference>
<dbReference type="SUPFAM" id="SSF53850">
    <property type="entry name" value="Periplasmic binding protein-like II"/>
    <property type="match status" value="1"/>
</dbReference>
<keyword id="KW-1003">Cell membrane</keyword>
<keyword id="KW-1015">Disulfide bond</keyword>
<keyword id="KW-0325">Glycoprotein</keyword>
<keyword id="KW-0407">Ion channel</keyword>
<keyword id="KW-0406">Ion transport</keyword>
<keyword id="KW-1071">Ligand-gated ion channel</keyword>
<keyword id="KW-0472">Membrane</keyword>
<keyword id="KW-0597">Phosphoprotein</keyword>
<keyword id="KW-0628">Postsynaptic cell membrane</keyword>
<keyword id="KW-0675">Receptor</keyword>
<keyword id="KW-1185">Reference proteome</keyword>
<keyword id="KW-0732">Signal</keyword>
<keyword id="KW-0770">Synapse</keyword>
<keyword id="KW-0812">Transmembrane</keyword>
<keyword id="KW-1133">Transmembrane helix</keyword>
<keyword id="KW-0813">Transport</keyword>
<organism>
    <name type="scientific">Macaca fascicularis</name>
    <name type="common">Crab-eating macaque</name>
    <name type="synonym">Cynomolgus monkey</name>
    <dbReference type="NCBI Taxonomy" id="9541"/>
    <lineage>
        <taxon>Eukaryota</taxon>
        <taxon>Metazoa</taxon>
        <taxon>Chordata</taxon>
        <taxon>Craniata</taxon>
        <taxon>Vertebrata</taxon>
        <taxon>Euteleostomi</taxon>
        <taxon>Mammalia</taxon>
        <taxon>Eutheria</taxon>
        <taxon>Euarchontoglires</taxon>
        <taxon>Primates</taxon>
        <taxon>Haplorrhini</taxon>
        <taxon>Catarrhini</taxon>
        <taxon>Cercopithecidae</taxon>
        <taxon>Cercopithecinae</taxon>
        <taxon>Macaca</taxon>
    </lineage>
</organism>
<reference key="1">
    <citation type="journal article" date="2006" name="Mol. Vis.">
        <title>Expression and sequences of genes encoding glutamate receptors and transporters in primate retina determined using 3'-end amplification polymerase chain reaction.</title>
        <authorList>
            <person name="Hanna M.C."/>
            <person name="Calkins D.J."/>
        </authorList>
    </citation>
    <scope>NUCLEOTIDE SEQUENCE [MRNA]</scope>
    <source>
        <tissue>Retina</tissue>
    </source>
</reference>